<gene>
    <name evidence="1" type="primary">rplS</name>
    <name type="ordered locus">MGAS10270_Spy0608</name>
</gene>
<evidence type="ECO:0000255" key="1">
    <source>
        <dbReference type="HAMAP-Rule" id="MF_00402"/>
    </source>
</evidence>
<evidence type="ECO:0000305" key="2"/>
<protein>
    <recommendedName>
        <fullName evidence="1">Large ribosomal subunit protein bL19</fullName>
    </recommendedName>
    <alternativeName>
        <fullName evidence="2">50S ribosomal protein L19</fullName>
    </alternativeName>
</protein>
<sequence length="115" mass="13131">MNPLIQSLTEGQLRSDIPNFRPGDTVRVHAKVVEGTRERIQIFEGVVISRKGQGISEMYTVRKISGGIGVERTFPIHTPRVDKIEVVRHGKVRRAKLYYLRALQGKAARIKEIRR</sequence>
<dbReference type="EMBL" id="CP000260">
    <property type="protein sequence ID" value="ABF33673.1"/>
    <property type="molecule type" value="Genomic_DNA"/>
</dbReference>
<dbReference type="SMR" id="Q1JHR3"/>
<dbReference type="KEGG" id="sph:MGAS10270_Spy0608"/>
<dbReference type="HOGENOM" id="CLU_103507_2_1_9"/>
<dbReference type="Proteomes" id="UP000002436">
    <property type="component" value="Chromosome"/>
</dbReference>
<dbReference type="GO" id="GO:0022625">
    <property type="term" value="C:cytosolic large ribosomal subunit"/>
    <property type="evidence" value="ECO:0007669"/>
    <property type="project" value="TreeGrafter"/>
</dbReference>
<dbReference type="GO" id="GO:0003735">
    <property type="term" value="F:structural constituent of ribosome"/>
    <property type="evidence" value="ECO:0007669"/>
    <property type="project" value="InterPro"/>
</dbReference>
<dbReference type="GO" id="GO:0006412">
    <property type="term" value="P:translation"/>
    <property type="evidence" value="ECO:0007669"/>
    <property type="project" value="UniProtKB-UniRule"/>
</dbReference>
<dbReference type="FunFam" id="2.30.30.790:FF:000001">
    <property type="entry name" value="50S ribosomal protein L19"/>
    <property type="match status" value="1"/>
</dbReference>
<dbReference type="Gene3D" id="2.30.30.790">
    <property type="match status" value="1"/>
</dbReference>
<dbReference type="HAMAP" id="MF_00402">
    <property type="entry name" value="Ribosomal_bL19"/>
    <property type="match status" value="1"/>
</dbReference>
<dbReference type="InterPro" id="IPR001857">
    <property type="entry name" value="Ribosomal_bL19"/>
</dbReference>
<dbReference type="InterPro" id="IPR018257">
    <property type="entry name" value="Ribosomal_bL19_CS"/>
</dbReference>
<dbReference type="InterPro" id="IPR038657">
    <property type="entry name" value="Ribosomal_bL19_sf"/>
</dbReference>
<dbReference type="InterPro" id="IPR008991">
    <property type="entry name" value="Translation_prot_SH3-like_sf"/>
</dbReference>
<dbReference type="NCBIfam" id="TIGR01024">
    <property type="entry name" value="rplS_bact"/>
    <property type="match status" value="1"/>
</dbReference>
<dbReference type="PANTHER" id="PTHR15680:SF9">
    <property type="entry name" value="LARGE RIBOSOMAL SUBUNIT PROTEIN BL19M"/>
    <property type="match status" value="1"/>
</dbReference>
<dbReference type="PANTHER" id="PTHR15680">
    <property type="entry name" value="RIBOSOMAL PROTEIN L19"/>
    <property type="match status" value="1"/>
</dbReference>
<dbReference type="Pfam" id="PF01245">
    <property type="entry name" value="Ribosomal_L19"/>
    <property type="match status" value="1"/>
</dbReference>
<dbReference type="PIRSF" id="PIRSF002191">
    <property type="entry name" value="Ribosomal_L19"/>
    <property type="match status" value="1"/>
</dbReference>
<dbReference type="PRINTS" id="PR00061">
    <property type="entry name" value="RIBOSOMALL19"/>
</dbReference>
<dbReference type="SUPFAM" id="SSF50104">
    <property type="entry name" value="Translation proteins SH3-like domain"/>
    <property type="match status" value="1"/>
</dbReference>
<dbReference type="PROSITE" id="PS01015">
    <property type="entry name" value="RIBOSOMAL_L19"/>
    <property type="match status" value="1"/>
</dbReference>
<keyword id="KW-0687">Ribonucleoprotein</keyword>
<keyword id="KW-0689">Ribosomal protein</keyword>
<accession>Q1JHR3</accession>
<proteinExistence type="inferred from homology"/>
<comment type="function">
    <text evidence="1">This protein is located at the 30S-50S ribosomal subunit interface and may play a role in the structure and function of the aminoacyl-tRNA binding site.</text>
</comment>
<comment type="similarity">
    <text evidence="1">Belongs to the bacterial ribosomal protein bL19 family.</text>
</comment>
<name>RL19_STRPD</name>
<organism>
    <name type="scientific">Streptococcus pyogenes serotype M2 (strain MGAS10270)</name>
    <dbReference type="NCBI Taxonomy" id="370552"/>
    <lineage>
        <taxon>Bacteria</taxon>
        <taxon>Bacillati</taxon>
        <taxon>Bacillota</taxon>
        <taxon>Bacilli</taxon>
        <taxon>Lactobacillales</taxon>
        <taxon>Streptococcaceae</taxon>
        <taxon>Streptococcus</taxon>
    </lineage>
</organism>
<feature type="chain" id="PRO_0000252550" description="Large ribosomal subunit protein bL19">
    <location>
        <begin position="1"/>
        <end position="115"/>
    </location>
</feature>
<reference key="1">
    <citation type="journal article" date="2006" name="Proc. Natl. Acad. Sci. U.S.A.">
        <title>Molecular genetic anatomy of inter- and intraserotype variation in the human bacterial pathogen group A Streptococcus.</title>
        <authorList>
            <person name="Beres S.B."/>
            <person name="Richter E.W."/>
            <person name="Nagiec M.J."/>
            <person name="Sumby P."/>
            <person name="Porcella S.F."/>
            <person name="DeLeo F.R."/>
            <person name="Musser J.M."/>
        </authorList>
    </citation>
    <scope>NUCLEOTIDE SEQUENCE [LARGE SCALE GENOMIC DNA]</scope>
    <source>
        <strain>MGAS10270</strain>
    </source>
</reference>